<accession>Q189A6</accession>
<feature type="chain" id="PRO_1000048333" description="Glutaminase">
    <location>
        <begin position="1"/>
        <end position="309"/>
    </location>
</feature>
<feature type="binding site" evidence="1">
    <location>
        <position position="65"/>
    </location>
    <ligand>
        <name>substrate</name>
    </ligand>
</feature>
<feature type="binding site" evidence="1">
    <location>
        <position position="117"/>
    </location>
    <ligand>
        <name>substrate</name>
    </ligand>
</feature>
<feature type="binding site" evidence="1">
    <location>
        <position position="162"/>
    </location>
    <ligand>
        <name>substrate</name>
    </ligand>
</feature>
<feature type="binding site" evidence="1">
    <location>
        <position position="169"/>
    </location>
    <ligand>
        <name>substrate</name>
    </ligand>
</feature>
<feature type="binding site" evidence="1">
    <location>
        <position position="193"/>
    </location>
    <ligand>
        <name>substrate</name>
    </ligand>
</feature>
<feature type="binding site" evidence="1">
    <location>
        <position position="245"/>
    </location>
    <ligand>
        <name>substrate</name>
    </ligand>
</feature>
<feature type="binding site" evidence="1">
    <location>
        <position position="263"/>
    </location>
    <ligand>
        <name>substrate</name>
    </ligand>
</feature>
<comment type="catalytic activity">
    <reaction evidence="1">
        <text>L-glutamine + H2O = L-glutamate + NH4(+)</text>
        <dbReference type="Rhea" id="RHEA:15889"/>
        <dbReference type="ChEBI" id="CHEBI:15377"/>
        <dbReference type="ChEBI" id="CHEBI:28938"/>
        <dbReference type="ChEBI" id="CHEBI:29985"/>
        <dbReference type="ChEBI" id="CHEBI:58359"/>
        <dbReference type="EC" id="3.5.1.2"/>
    </reaction>
</comment>
<comment type="subunit">
    <text evidence="1">Homotetramer.</text>
</comment>
<comment type="similarity">
    <text evidence="1">Belongs to the glutaminase family.</text>
</comment>
<name>GLSA_CLOD6</name>
<dbReference type="EC" id="3.5.1.2" evidence="1"/>
<dbReference type="EMBL" id="AM180355">
    <property type="protein sequence ID" value="CAJ67391.1"/>
    <property type="molecule type" value="Genomic_DNA"/>
</dbReference>
<dbReference type="RefSeq" id="WP_003417962.1">
    <property type="nucleotide sequence ID" value="NZ_JAUPES010000001.1"/>
</dbReference>
<dbReference type="RefSeq" id="YP_001087034.1">
    <property type="nucleotide sequence ID" value="NC_009089.1"/>
</dbReference>
<dbReference type="SMR" id="Q189A6"/>
<dbReference type="STRING" id="272563.CD630_05580"/>
<dbReference type="EnsemblBacteria" id="CAJ67391">
    <property type="protein sequence ID" value="CAJ67391"/>
    <property type="gene ID" value="CD630_05580"/>
</dbReference>
<dbReference type="GeneID" id="66353055"/>
<dbReference type="KEGG" id="cdf:CD630_05580"/>
<dbReference type="KEGG" id="pdc:CDIF630_00671"/>
<dbReference type="PATRIC" id="fig|272563.120.peg.568"/>
<dbReference type="eggNOG" id="COG2066">
    <property type="taxonomic scope" value="Bacteria"/>
</dbReference>
<dbReference type="OrthoDB" id="9788822at2"/>
<dbReference type="PhylomeDB" id="Q189A6"/>
<dbReference type="BioCyc" id="PDIF272563:G12WB-670-MONOMER"/>
<dbReference type="Proteomes" id="UP000001978">
    <property type="component" value="Chromosome"/>
</dbReference>
<dbReference type="GO" id="GO:0004359">
    <property type="term" value="F:glutaminase activity"/>
    <property type="evidence" value="ECO:0007669"/>
    <property type="project" value="UniProtKB-UniRule"/>
</dbReference>
<dbReference type="GO" id="GO:0006537">
    <property type="term" value="P:glutamate biosynthetic process"/>
    <property type="evidence" value="ECO:0007669"/>
    <property type="project" value="TreeGrafter"/>
</dbReference>
<dbReference type="GO" id="GO:0006543">
    <property type="term" value="P:glutamine catabolic process"/>
    <property type="evidence" value="ECO:0007669"/>
    <property type="project" value="TreeGrafter"/>
</dbReference>
<dbReference type="FunFam" id="3.40.710.10:FF:000005">
    <property type="entry name" value="Glutaminase"/>
    <property type="match status" value="1"/>
</dbReference>
<dbReference type="Gene3D" id="3.40.710.10">
    <property type="entry name" value="DD-peptidase/beta-lactamase superfamily"/>
    <property type="match status" value="1"/>
</dbReference>
<dbReference type="HAMAP" id="MF_00313">
    <property type="entry name" value="Glutaminase"/>
    <property type="match status" value="1"/>
</dbReference>
<dbReference type="InterPro" id="IPR012338">
    <property type="entry name" value="Beta-lactam/transpept-like"/>
</dbReference>
<dbReference type="InterPro" id="IPR015868">
    <property type="entry name" value="Glutaminase"/>
</dbReference>
<dbReference type="NCBIfam" id="TIGR03814">
    <property type="entry name" value="Gln_ase"/>
    <property type="match status" value="1"/>
</dbReference>
<dbReference type="PANTHER" id="PTHR12544">
    <property type="entry name" value="GLUTAMINASE"/>
    <property type="match status" value="1"/>
</dbReference>
<dbReference type="PANTHER" id="PTHR12544:SF29">
    <property type="entry name" value="GLUTAMINASE"/>
    <property type="match status" value="1"/>
</dbReference>
<dbReference type="Pfam" id="PF04960">
    <property type="entry name" value="Glutaminase"/>
    <property type="match status" value="1"/>
</dbReference>
<dbReference type="SUPFAM" id="SSF56601">
    <property type="entry name" value="beta-lactamase/transpeptidase-like"/>
    <property type="match status" value="1"/>
</dbReference>
<proteinExistence type="inferred from homology"/>
<evidence type="ECO:0000255" key="1">
    <source>
        <dbReference type="HAMAP-Rule" id="MF_00313"/>
    </source>
</evidence>
<protein>
    <recommendedName>
        <fullName evidence="1">Glutaminase</fullName>
        <ecNumber evidence="1">3.5.1.2</ecNumber>
    </recommendedName>
</protein>
<gene>
    <name evidence="1" type="primary">glsA</name>
    <name type="ordered locus">CD630_05580</name>
</gene>
<sequence length="309" mass="33948">MNTLDETLLKEIISSNKKYTNYGQVASYIPELKNARRNDLGICIIDSENNLYSAGNCSTKFTIQSISKPIVLAMALMDNDWEDVFSNVGMEPSGDPFNSIMKLEINDTKKPCNPMINAGAIVTTSLINGSCLEEKEERMLSFFRKLAKNDNIGINYDVYKSEKMTGDRNRAMAYLLKSDGFIRGNVEDVLDLYFKQCSIEIDSVDLARIGINLANYGVDIENGEHLMSEMVSRIVKTFMMTCGMYDASGEFAIKVGIPAKSGVGGGIMASVPGRMGIGVYGPALDKKGNSVAGVKVLEELSNKLKLNIF</sequence>
<reference key="1">
    <citation type="journal article" date="2006" name="Nat. Genet.">
        <title>The multidrug-resistant human pathogen Clostridium difficile has a highly mobile, mosaic genome.</title>
        <authorList>
            <person name="Sebaihia M."/>
            <person name="Wren B.W."/>
            <person name="Mullany P."/>
            <person name="Fairweather N.F."/>
            <person name="Minton N."/>
            <person name="Stabler R."/>
            <person name="Thomson N.R."/>
            <person name="Roberts A.P."/>
            <person name="Cerdeno-Tarraga A.M."/>
            <person name="Wang H."/>
            <person name="Holden M.T.G."/>
            <person name="Wright A."/>
            <person name="Churcher C."/>
            <person name="Quail M.A."/>
            <person name="Baker S."/>
            <person name="Bason N."/>
            <person name="Brooks K."/>
            <person name="Chillingworth T."/>
            <person name="Cronin A."/>
            <person name="Davis P."/>
            <person name="Dowd L."/>
            <person name="Fraser A."/>
            <person name="Feltwell T."/>
            <person name="Hance Z."/>
            <person name="Holroyd S."/>
            <person name="Jagels K."/>
            <person name="Moule S."/>
            <person name="Mungall K."/>
            <person name="Price C."/>
            <person name="Rabbinowitsch E."/>
            <person name="Sharp S."/>
            <person name="Simmonds M."/>
            <person name="Stevens K."/>
            <person name="Unwin L."/>
            <person name="Whithead S."/>
            <person name="Dupuy B."/>
            <person name="Dougan G."/>
            <person name="Barrell B."/>
            <person name="Parkhill J."/>
        </authorList>
    </citation>
    <scope>NUCLEOTIDE SEQUENCE [LARGE SCALE GENOMIC DNA]</scope>
    <source>
        <strain>630</strain>
    </source>
</reference>
<organism>
    <name type="scientific">Clostridioides difficile (strain 630)</name>
    <name type="common">Peptoclostridium difficile</name>
    <dbReference type="NCBI Taxonomy" id="272563"/>
    <lineage>
        <taxon>Bacteria</taxon>
        <taxon>Bacillati</taxon>
        <taxon>Bacillota</taxon>
        <taxon>Clostridia</taxon>
        <taxon>Peptostreptococcales</taxon>
        <taxon>Peptostreptococcaceae</taxon>
        <taxon>Clostridioides</taxon>
    </lineage>
</organism>
<keyword id="KW-0378">Hydrolase</keyword>
<keyword id="KW-1185">Reference proteome</keyword>